<gene>
    <name evidence="1" type="primary">fusA</name>
    <name type="ordered locus">LMOf2365_2633</name>
</gene>
<keyword id="KW-0963">Cytoplasm</keyword>
<keyword id="KW-0251">Elongation factor</keyword>
<keyword id="KW-0342">GTP-binding</keyword>
<keyword id="KW-0547">Nucleotide-binding</keyword>
<keyword id="KW-0648">Protein biosynthesis</keyword>
<reference key="1">
    <citation type="journal article" date="2004" name="Nucleic Acids Res.">
        <title>Whole genome comparisons of serotype 4b and 1/2a strains of the food-borne pathogen Listeria monocytogenes reveal new insights into the core genome components of this species.</title>
        <authorList>
            <person name="Nelson K.E."/>
            <person name="Fouts D.E."/>
            <person name="Mongodin E.F."/>
            <person name="Ravel J."/>
            <person name="DeBoy R.T."/>
            <person name="Kolonay J.F."/>
            <person name="Rasko D.A."/>
            <person name="Angiuoli S.V."/>
            <person name="Gill S.R."/>
            <person name="Paulsen I.T."/>
            <person name="Peterson J.D."/>
            <person name="White O."/>
            <person name="Nelson W.C."/>
            <person name="Nierman W.C."/>
            <person name="Beanan M.J."/>
            <person name="Brinkac L.M."/>
            <person name="Daugherty S.C."/>
            <person name="Dodson R.J."/>
            <person name="Durkin A.S."/>
            <person name="Madupu R."/>
            <person name="Haft D.H."/>
            <person name="Selengut J."/>
            <person name="Van Aken S.E."/>
            <person name="Khouri H.M."/>
            <person name="Fedorova N."/>
            <person name="Forberger H.A."/>
            <person name="Tran B."/>
            <person name="Kathariou S."/>
            <person name="Wonderling L.D."/>
            <person name="Uhlich G.A."/>
            <person name="Bayles D.O."/>
            <person name="Luchansky J.B."/>
            <person name="Fraser C.M."/>
        </authorList>
    </citation>
    <scope>NUCLEOTIDE SEQUENCE [LARGE SCALE GENOMIC DNA]</scope>
    <source>
        <strain>F2365</strain>
    </source>
</reference>
<dbReference type="EMBL" id="AE017262">
    <property type="protein sequence ID" value="AAT05398.1"/>
    <property type="molecule type" value="Genomic_DNA"/>
</dbReference>
<dbReference type="RefSeq" id="WP_003724965.1">
    <property type="nucleotide sequence ID" value="NC_002973.6"/>
</dbReference>
<dbReference type="SMR" id="Q71WB8"/>
<dbReference type="GeneID" id="87012818"/>
<dbReference type="KEGG" id="lmf:LMOf2365_2633"/>
<dbReference type="HOGENOM" id="CLU_002794_4_1_9"/>
<dbReference type="GO" id="GO:0005737">
    <property type="term" value="C:cytoplasm"/>
    <property type="evidence" value="ECO:0007669"/>
    <property type="project" value="UniProtKB-SubCell"/>
</dbReference>
<dbReference type="GO" id="GO:0005525">
    <property type="term" value="F:GTP binding"/>
    <property type="evidence" value="ECO:0007669"/>
    <property type="project" value="UniProtKB-UniRule"/>
</dbReference>
<dbReference type="GO" id="GO:0003924">
    <property type="term" value="F:GTPase activity"/>
    <property type="evidence" value="ECO:0007669"/>
    <property type="project" value="InterPro"/>
</dbReference>
<dbReference type="GO" id="GO:0003746">
    <property type="term" value="F:translation elongation factor activity"/>
    <property type="evidence" value="ECO:0007669"/>
    <property type="project" value="UniProtKB-UniRule"/>
</dbReference>
<dbReference type="GO" id="GO:0032790">
    <property type="term" value="P:ribosome disassembly"/>
    <property type="evidence" value="ECO:0007669"/>
    <property type="project" value="TreeGrafter"/>
</dbReference>
<dbReference type="CDD" id="cd01886">
    <property type="entry name" value="EF-G"/>
    <property type="match status" value="1"/>
</dbReference>
<dbReference type="CDD" id="cd16262">
    <property type="entry name" value="EFG_III"/>
    <property type="match status" value="1"/>
</dbReference>
<dbReference type="CDD" id="cd01434">
    <property type="entry name" value="EFG_mtEFG1_IV"/>
    <property type="match status" value="1"/>
</dbReference>
<dbReference type="CDD" id="cd03713">
    <property type="entry name" value="EFG_mtEFG_C"/>
    <property type="match status" value="1"/>
</dbReference>
<dbReference type="CDD" id="cd04088">
    <property type="entry name" value="EFG_mtEFG_II"/>
    <property type="match status" value="1"/>
</dbReference>
<dbReference type="FunFam" id="2.40.30.10:FF:000006">
    <property type="entry name" value="Elongation factor G"/>
    <property type="match status" value="1"/>
</dbReference>
<dbReference type="FunFam" id="3.30.230.10:FF:000003">
    <property type="entry name" value="Elongation factor G"/>
    <property type="match status" value="1"/>
</dbReference>
<dbReference type="FunFam" id="3.30.70.240:FF:000001">
    <property type="entry name" value="Elongation factor G"/>
    <property type="match status" value="1"/>
</dbReference>
<dbReference type="FunFam" id="3.30.70.870:FF:000001">
    <property type="entry name" value="Elongation factor G"/>
    <property type="match status" value="1"/>
</dbReference>
<dbReference type="FunFam" id="3.40.50.300:FF:000029">
    <property type="entry name" value="Elongation factor G"/>
    <property type="match status" value="1"/>
</dbReference>
<dbReference type="Gene3D" id="3.30.230.10">
    <property type="match status" value="1"/>
</dbReference>
<dbReference type="Gene3D" id="3.30.70.240">
    <property type="match status" value="1"/>
</dbReference>
<dbReference type="Gene3D" id="3.30.70.870">
    <property type="entry name" value="Elongation Factor G (Translational Gtpase), domain 3"/>
    <property type="match status" value="1"/>
</dbReference>
<dbReference type="Gene3D" id="3.40.50.300">
    <property type="entry name" value="P-loop containing nucleotide triphosphate hydrolases"/>
    <property type="match status" value="1"/>
</dbReference>
<dbReference type="Gene3D" id="2.40.30.10">
    <property type="entry name" value="Translation factors"/>
    <property type="match status" value="1"/>
</dbReference>
<dbReference type="HAMAP" id="MF_00054_B">
    <property type="entry name" value="EF_G_EF_2_B"/>
    <property type="match status" value="1"/>
</dbReference>
<dbReference type="InterPro" id="IPR041095">
    <property type="entry name" value="EFG_II"/>
</dbReference>
<dbReference type="InterPro" id="IPR009022">
    <property type="entry name" value="EFG_III"/>
</dbReference>
<dbReference type="InterPro" id="IPR035647">
    <property type="entry name" value="EFG_III/V"/>
</dbReference>
<dbReference type="InterPro" id="IPR047872">
    <property type="entry name" value="EFG_IV"/>
</dbReference>
<dbReference type="InterPro" id="IPR035649">
    <property type="entry name" value="EFG_V"/>
</dbReference>
<dbReference type="InterPro" id="IPR000640">
    <property type="entry name" value="EFG_V-like"/>
</dbReference>
<dbReference type="InterPro" id="IPR004161">
    <property type="entry name" value="EFTu-like_2"/>
</dbReference>
<dbReference type="InterPro" id="IPR031157">
    <property type="entry name" value="G_TR_CS"/>
</dbReference>
<dbReference type="InterPro" id="IPR027417">
    <property type="entry name" value="P-loop_NTPase"/>
</dbReference>
<dbReference type="InterPro" id="IPR020568">
    <property type="entry name" value="Ribosomal_Su5_D2-typ_SF"/>
</dbReference>
<dbReference type="InterPro" id="IPR014721">
    <property type="entry name" value="Ribsml_uS5_D2-typ_fold_subgr"/>
</dbReference>
<dbReference type="InterPro" id="IPR005225">
    <property type="entry name" value="Small_GTP-bd"/>
</dbReference>
<dbReference type="InterPro" id="IPR000795">
    <property type="entry name" value="T_Tr_GTP-bd_dom"/>
</dbReference>
<dbReference type="InterPro" id="IPR009000">
    <property type="entry name" value="Transl_B-barrel_sf"/>
</dbReference>
<dbReference type="InterPro" id="IPR004540">
    <property type="entry name" value="Transl_elong_EFG/EF2"/>
</dbReference>
<dbReference type="InterPro" id="IPR005517">
    <property type="entry name" value="Transl_elong_EFG/EF2_IV"/>
</dbReference>
<dbReference type="NCBIfam" id="TIGR00484">
    <property type="entry name" value="EF-G"/>
    <property type="match status" value="1"/>
</dbReference>
<dbReference type="NCBIfam" id="NF009379">
    <property type="entry name" value="PRK12740.1-3"/>
    <property type="match status" value="1"/>
</dbReference>
<dbReference type="NCBIfam" id="NF009381">
    <property type="entry name" value="PRK12740.1-5"/>
    <property type="match status" value="1"/>
</dbReference>
<dbReference type="NCBIfam" id="TIGR00231">
    <property type="entry name" value="small_GTP"/>
    <property type="match status" value="1"/>
</dbReference>
<dbReference type="PANTHER" id="PTHR43261:SF1">
    <property type="entry name" value="RIBOSOME-RELEASING FACTOR 2, MITOCHONDRIAL"/>
    <property type="match status" value="1"/>
</dbReference>
<dbReference type="PANTHER" id="PTHR43261">
    <property type="entry name" value="TRANSLATION ELONGATION FACTOR G-RELATED"/>
    <property type="match status" value="1"/>
</dbReference>
<dbReference type="Pfam" id="PF00679">
    <property type="entry name" value="EFG_C"/>
    <property type="match status" value="1"/>
</dbReference>
<dbReference type="Pfam" id="PF14492">
    <property type="entry name" value="EFG_III"/>
    <property type="match status" value="1"/>
</dbReference>
<dbReference type="Pfam" id="PF03764">
    <property type="entry name" value="EFG_IV"/>
    <property type="match status" value="1"/>
</dbReference>
<dbReference type="Pfam" id="PF00009">
    <property type="entry name" value="GTP_EFTU"/>
    <property type="match status" value="1"/>
</dbReference>
<dbReference type="Pfam" id="PF03144">
    <property type="entry name" value="GTP_EFTU_D2"/>
    <property type="match status" value="1"/>
</dbReference>
<dbReference type="PRINTS" id="PR00315">
    <property type="entry name" value="ELONGATNFCT"/>
</dbReference>
<dbReference type="SMART" id="SM00838">
    <property type="entry name" value="EFG_C"/>
    <property type="match status" value="1"/>
</dbReference>
<dbReference type="SMART" id="SM00889">
    <property type="entry name" value="EFG_IV"/>
    <property type="match status" value="1"/>
</dbReference>
<dbReference type="SUPFAM" id="SSF54980">
    <property type="entry name" value="EF-G C-terminal domain-like"/>
    <property type="match status" value="2"/>
</dbReference>
<dbReference type="SUPFAM" id="SSF52540">
    <property type="entry name" value="P-loop containing nucleoside triphosphate hydrolases"/>
    <property type="match status" value="1"/>
</dbReference>
<dbReference type="SUPFAM" id="SSF54211">
    <property type="entry name" value="Ribosomal protein S5 domain 2-like"/>
    <property type="match status" value="1"/>
</dbReference>
<dbReference type="SUPFAM" id="SSF50447">
    <property type="entry name" value="Translation proteins"/>
    <property type="match status" value="1"/>
</dbReference>
<dbReference type="PROSITE" id="PS00301">
    <property type="entry name" value="G_TR_1"/>
    <property type="match status" value="1"/>
</dbReference>
<dbReference type="PROSITE" id="PS51722">
    <property type="entry name" value="G_TR_2"/>
    <property type="match status" value="1"/>
</dbReference>
<feature type="chain" id="PRO_0000091147" description="Elongation factor G">
    <location>
        <begin position="1"/>
        <end position="695"/>
    </location>
</feature>
<feature type="domain" description="tr-type G">
    <location>
        <begin position="8"/>
        <end position="282"/>
    </location>
</feature>
<feature type="binding site" evidence="1">
    <location>
        <begin position="17"/>
        <end position="24"/>
    </location>
    <ligand>
        <name>GTP</name>
        <dbReference type="ChEBI" id="CHEBI:37565"/>
    </ligand>
</feature>
<feature type="binding site" evidence="1">
    <location>
        <begin position="81"/>
        <end position="85"/>
    </location>
    <ligand>
        <name>GTP</name>
        <dbReference type="ChEBI" id="CHEBI:37565"/>
    </ligand>
</feature>
<feature type="binding site" evidence="1">
    <location>
        <begin position="135"/>
        <end position="138"/>
    </location>
    <ligand>
        <name>GTP</name>
        <dbReference type="ChEBI" id="CHEBI:37565"/>
    </ligand>
</feature>
<sequence length="695" mass="76850">MAREFSLEKTRNIGIMAHIDAGKTTTTERILFYTGRIHKIGETHEGASQMDWMEQEQERGITITSAATTAQWKGYRVNIIDTPGHVDFTVEVERSLRVLDGAVAVLDAQSGVEPQTETVWRQATTYGVPRVVFVNKMDKIGADFLYSVGTLHERLAANAHPIQLPIGAEDTFEGIIDLIEMNALYYEDDLGNDPHIKEIPADLKDLADEYRGKLVEAVAELDEELMMKYLEGEEITKEELKAGIRKGTLNVEFYPVVCGTAFKNKGVQPMLDAVLDYLPAPTDVPAINGVLPDGEEAARHADDSEPFSSLAFKVMTDPYVGRLTFFRVYSGTLNSGSYVQNSTKGKRERVGRILQMHANHREEISIVYAGDIAAAVGLKDTTTGDTLCDEKEQIILESMEFPEPVIQVAIEPKSKADQDKMGQALAKLAEEDPTFRAETDQETGQTLISGMGELHLDILVDRMRREFRVEANVGDPQVSYRETFRKSAQVEGKFVRQSGGRGQYGHVWIEFGPNEEGKGFEFENAIVGGVVPREYIPAVQAGLEGALDNGVLAGYPLIDIKAKLYDGSYHDVDSNEMAFKVAASMALRNAAKKCDPVILEPMMAVEVVIPEEYLGDIMGNITSRRGRVDGMEARGNAQVVRAFVPLANMFGYATHLRSGTQGRGVYTMQFDHYEEVPKSIAEEIIKANGGNNKED</sequence>
<protein>
    <recommendedName>
        <fullName evidence="1">Elongation factor G</fullName>
        <shortName evidence="1">EF-G</shortName>
    </recommendedName>
</protein>
<name>EFG_LISMF</name>
<accession>Q71WB8</accession>
<evidence type="ECO:0000255" key="1">
    <source>
        <dbReference type="HAMAP-Rule" id="MF_00054"/>
    </source>
</evidence>
<organism>
    <name type="scientific">Listeria monocytogenes serotype 4b (strain F2365)</name>
    <dbReference type="NCBI Taxonomy" id="265669"/>
    <lineage>
        <taxon>Bacteria</taxon>
        <taxon>Bacillati</taxon>
        <taxon>Bacillota</taxon>
        <taxon>Bacilli</taxon>
        <taxon>Bacillales</taxon>
        <taxon>Listeriaceae</taxon>
        <taxon>Listeria</taxon>
    </lineage>
</organism>
<comment type="function">
    <text evidence="1">Catalyzes the GTP-dependent ribosomal translocation step during translation elongation. During this step, the ribosome changes from the pre-translocational (PRE) to the post-translocational (POST) state as the newly formed A-site-bound peptidyl-tRNA and P-site-bound deacylated tRNA move to the P and E sites, respectively. Catalyzes the coordinated movement of the two tRNA molecules, the mRNA and conformational changes in the ribosome.</text>
</comment>
<comment type="subcellular location">
    <subcellularLocation>
        <location evidence="1">Cytoplasm</location>
    </subcellularLocation>
</comment>
<comment type="similarity">
    <text evidence="1">Belongs to the TRAFAC class translation factor GTPase superfamily. Classic translation factor GTPase family. EF-G/EF-2 subfamily.</text>
</comment>
<proteinExistence type="inferred from homology"/>